<comment type="function">
    <text evidence="3 4">Transcription activator that may act as growth regulators in response to water deficit. Interacts with the core sequence 5'-CAATTATTA-3' of promoters in response to ABA and in an ABI1-dependent manner. Involved in the negative regulation of the ABA signaling pathway.</text>
</comment>
<comment type="subunit">
    <text evidence="4">Interacts with ABI1.</text>
</comment>
<comment type="subcellular location">
    <subcellularLocation>
        <location>Nucleus</location>
    </subcellularLocation>
</comment>
<comment type="tissue specificity">
    <text evidence="3 5">Widely expressed.</text>
</comment>
<comment type="induction">
    <text evidence="3 4 5">By water deficit, by abscisic acid (ABA) and by salt stress. Self expression regulation.</text>
</comment>
<comment type="PTM">
    <text evidence="4">Phosphorylated by PKA. Reversible inactivation of the binding to DNA by phosphorylation.</text>
</comment>
<comment type="similarity">
    <text evidence="6">Belongs to the HD-ZIP homeobox family. Class I subfamily.</text>
</comment>
<comment type="caution">
    <text evidence="6">It is uncertain whether Met-1 or Met-2 is the initiator.</text>
</comment>
<name>ATHB6_ARATH</name>
<sequence>MMKRLSSSDSVGGLISLCPTTSTDEQSPRRYGGREFQSMLEGYEEEEEAIVEERGHVGLSEKKRRLSINQVKALEKNFELENKLEPERKVKLAQELGLQPRQVAVWFQNRRARWKTKQLEKDYGVLKTQYDSLRHNFDSLRRDNESLLQEISKLKTKLNGGGGEEEEEENNAAVTTESDISVKEEEVSLPEKITEAPSSPPQFLEHSDGLNYRSFTDLRDLLPLKAAASSFAAAAGSSDSSDSSALLNEESSSNVTVAAPVTVPGGNFFQFVKMEQTEDHEDFLSGEEACEFFSDEQPPSLHWYSTVDHWN</sequence>
<organism>
    <name type="scientific">Arabidopsis thaliana</name>
    <name type="common">Mouse-ear cress</name>
    <dbReference type="NCBI Taxonomy" id="3702"/>
    <lineage>
        <taxon>Eukaryota</taxon>
        <taxon>Viridiplantae</taxon>
        <taxon>Streptophyta</taxon>
        <taxon>Embryophyta</taxon>
        <taxon>Tracheophyta</taxon>
        <taxon>Spermatophyta</taxon>
        <taxon>Magnoliopsida</taxon>
        <taxon>eudicotyledons</taxon>
        <taxon>Gunneridae</taxon>
        <taxon>Pentapetalae</taxon>
        <taxon>rosids</taxon>
        <taxon>malvids</taxon>
        <taxon>Brassicales</taxon>
        <taxon>Brassicaceae</taxon>
        <taxon>Camelineae</taxon>
        <taxon>Arabidopsis</taxon>
    </lineage>
</organism>
<dbReference type="EMBL" id="X67034">
    <property type="protein sequence ID" value="CAA47427.1"/>
    <property type="molecule type" value="mRNA"/>
</dbReference>
<dbReference type="EMBL" id="AC006592">
    <property type="protein sequence ID" value="AAD22367.2"/>
    <property type="molecule type" value="Genomic_DNA"/>
</dbReference>
<dbReference type="EMBL" id="CP002685">
    <property type="protein sequence ID" value="AEC07305.1"/>
    <property type="molecule type" value="Genomic_DNA"/>
</dbReference>
<dbReference type="EMBL" id="AY060569">
    <property type="protein sequence ID" value="AAL31198.1"/>
    <property type="molecule type" value="mRNA"/>
</dbReference>
<dbReference type="EMBL" id="AY063819">
    <property type="protein sequence ID" value="AAL36175.1"/>
    <property type="molecule type" value="mRNA"/>
</dbReference>
<dbReference type="EMBL" id="AY094457">
    <property type="protein sequence ID" value="AAM19827.1"/>
    <property type="molecule type" value="mRNA"/>
</dbReference>
<dbReference type="EMBL" id="AY122903">
    <property type="protein sequence ID" value="AAM67436.1"/>
    <property type="molecule type" value="mRNA"/>
</dbReference>
<dbReference type="EMBL" id="AF104900">
    <property type="protein sequence ID" value="AAD41726.1"/>
    <property type="molecule type" value="Genomic_DNA"/>
</dbReference>
<dbReference type="PIR" id="E84612">
    <property type="entry name" value="E84612"/>
</dbReference>
<dbReference type="PIR" id="S47136">
    <property type="entry name" value="S47136"/>
</dbReference>
<dbReference type="RefSeq" id="NP_565536.1">
    <property type="nucleotide sequence ID" value="NM_127808.3"/>
</dbReference>
<dbReference type="SMR" id="P46668"/>
<dbReference type="BioGRID" id="2128">
    <property type="interactions" value="19"/>
</dbReference>
<dbReference type="FunCoup" id="P46668">
    <property type="interactions" value="78"/>
</dbReference>
<dbReference type="IntAct" id="P46668">
    <property type="interactions" value="1"/>
</dbReference>
<dbReference type="STRING" id="3702.P46668"/>
<dbReference type="iPTMnet" id="P46668"/>
<dbReference type="PaxDb" id="3702-AT2G22430.1"/>
<dbReference type="ProteomicsDB" id="246747"/>
<dbReference type="EnsemblPlants" id="AT2G22430.1">
    <property type="protein sequence ID" value="AT2G22430.1"/>
    <property type="gene ID" value="AT2G22430"/>
</dbReference>
<dbReference type="GeneID" id="816775"/>
<dbReference type="Gramene" id="AT2G22430.1">
    <property type="protein sequence ID" value="AT2G22430.1"/>
    <property type="gene ID" value="AT2G22430"/>
</dbReference>
<dbReference type="KEGG" id="ath:AT2G22430"/>
<dbReference type="Araport" id="AT2G22430"/>
<dbReference type="TAIR" id="AT2G22430">
    <property type="gene designation" value="HB6"/>
</dbReference>
<dbReference type="eggNOG" id="KOG0483">
    <property type="taxonomic scope" value="Eukaryota"/>
</dbReference>
<dbReference type="HOGENOM" id="CLU_060842_1_0_1"/>
<dbReference type="InParanoid" id="P46668"/>
<dbReference type="OMA" id="WYYPDQW"/>
<dbReference type="PhylomeDB" id="P46668"/>
<dbReference type="PRO" id="PR:P46668"/>
<dbReference type="Proteomes" id="UP000006548">
    <property type="component" value="Chromosome 2"/>
</dbReference>
<dbReference type="ExpressionAtlas" id="P46668">
    <property type="expression patterns" value="baseline and differential"/>
</dbReference>
<dbReference type="GO" id="GO:0005634">
    <property type="term" value="C:nucleus"/>
    <property type="evidence" value="ECO:0000314"/>
    <property type="project" value="TAIR"/>
</dbReference>
<dbReference type="GO" id="GO:0003677">
    <property type="term" value="F:DNA binding"/>
    <property type="evidence" value="ECO:0000314"/>
    <property type="project" value="TAIR"/>
</dbReference>
<dbReference type="GO" id="GO:0003700">
    <property type="term" value="F:DNA-binding transcription factor activity"/>
    <property type="evidence" value="ECO:0000250"/>
    <property type="project" value="TAIR"/>
</dbReference>
<dbReference type="GO" id="GO:0000981">
    <property type="term" value="F:DNA-binding transcription factor activity, RNA polymerase II-specific"/>
    <property type="evidence" value="ECO:0007669"/>
    <property type="project" value="InterPro"/>
</dbReference>
<dbReference type="GO" id="GO:0043565">
    <property type="term" value="F:sequence-specific DNA binding"/>
    <property type="evidence" value="ECO:0000314"/>
    <property type="project" value="TAIR"/>
</dbReference>
<dbReference type="GO" id="GO:0000976">
    <property type="term" value="F:transcription cis-regulatory region binding"/>
    <property type="evidence" value="ECO:0000353"/>
    <property type="project" value="TAIR"/>
</dbReference>
<dbReference type="GO" id="GO:0009738">
    <property type="term" value="P:abscisic acid-activated signaling pathway"/>
    <property type="evidence" value="ECO:0000304"/>
    <property type="project" value="TAIR"/>
</dbReference>
<dbReference type="GO" id="GO:0009788">
    <property type="term" value="P:negative regulation of abscisic acid-activated signaling pathway"/>
    <property type="evidence" value="ECO:0000315"/>
    <property type="project" value="TAIR"/>
</dbReference>
<dbReference type="GO" id="GO:0045893">
    <property type="term" value="P:positive regulation of DNA-templated transcription"/>
    <property type="evidence" value="ECO:0000314"/>
    <property type="project" value="TAIR"/>
</dbReference>
<dbReference type="GO" id="GO:0009414">
    <property type="term" value="P:response to water deprivation"/>
    <property type="evidence" value="ECO:0000270"/>
    <property type="project" value="TAIR"/>
</dbReference>
<dbReference type="CDD" id="cd00086">
    <property type="entry name" value="homeodomain"/>
    <property type="match status" value="1"/>
</dbReference>
<dbReference type="FunFam" id="1.10.10.60:FF:000144">
    <property type="entry name" value="homeobox-leucine zipper protein ATHB-6-like"/>
    <property type="match status" value="1"/>
</dbReference>
<dbReference type="Gene3D" id="1.10.10.60">
    <property type="entry name" value="Homeodomain-like"/>
    <property type="match status" value="1"/>
</dbReference>
<dbReference type="InterPro" id="IPR001356">
    <property type="entry name" value="HD"/>
</dbReference>
<dbReference type="InterPro" id="IPR045224">
    <property type="entry name" value="HDZip_class_I_plant"/>
</dbReference>
<dbReference type="InterPro" id="IPR017970">
    <property type="entry name" value="Homeobox_CS"/>
</dbReference>
<dbReference type="InterPro" id="IPR009057">
    <property type="entry name" value="Homeodomain-like_sf"/>
</dbReference>
<dbReference type="InterPro" id="IPR000047">
    <property type="entry name" value="HTH_motif"/>
</dbReference>
<dbReference type="InterPro" id="IPR003106">
    <property type="entry name" value="Leu_zip_homeo"/>
</dbReference>
<dbReference type="PANTHER" id="PTHR24326">
    <property type="entry name" value="HOMEOBOX-LEUCINE ZIPPER PROTEIN"/>
    <property type="match status" value="1"/>
</dbReference>
<dbReference type="PANTHER" id="PTHR24326:SF547">
    <property type="entry name" value="HOMEOBOX-LEUCINE ZIPPER PROTEIN ATHB-6"/>
    <property type="match status" value="1"/>
</dbReference>
<dbReference type="Pfam" id="PF02183">
    <property type="entry name" value="HALZ"/>
    <property type="match status" value="1"/>
</dbReference>
<dbReference type="Pfam" id="PF00046">
    <property type="entry name" value="Homeodomain"/>
    <property type="match status" value="1"/>
</dbReference>
<dbReference type="PRINTS" id="PR00031">
    <property type="entry name" value="HTHREPRESSR"/>
</dbReference>
<dbReference type="SMART" id="SM00389">
    <property type="entry name" value="HOX"/>
    <property type="match status" value="1"/>
</dbReference>
<dbReference type="SUPFAM" id="SSF46689">
    <property type="entry name" value="Homeodomain-like"/>
    <property type="match status" value="1"/>
</dbReference>
<dbReference type="PROSITE" id="PS00027">
    <property type="entry name" value="HOMEOBOX_1"/>
    <property type="match status" value="1"/>
</dbReference>
<dbReference type="PROSITE" id="PS50071">
    <property type="entry name" value="HOMEOBOX_2"/>
    <property type="match status" value="1"/>
</dbReference>
<accession>P46668</accession>
<accession>Q9SJZ1</accession>
<accession>Q9SQ78</accession>
<reference key="1">
    <citation type="journal article" date="1994" name="Plant Mol. Biol.">
        <title>Expression patterns of novel genes encoding homeodomain leucine-zipper proteins in Arabidopsis thaliana.</title>
        <authorList>
            <person name="Soederman E."/>
            <person name="Mattsson J."/>
            <person name="Svenson M."/>
            <person name="Borkird C."/>
            <person name="Engstroem P."/>
        </authorList>
    </citation>
    <scope>NUCLEOTIDE SEQUENCE [MRNA]</scope>
    <source>
        <strain>cv. Columbia</strain>
    </source>
</reference>
<reference key="2">
    <citation type="journal article" date="1999" name="Nature">
        <title>Sequence and analysis of chromosome 2 of the plant Arabidopsis thaliana.</title>
        <authorList>
            <person name="Lin X."/>
            <person name="Kaul S."/>
            <person name="Rounsley S.D."/>
            <person name="Shea T.P."/>
            <person name="Benito M.-I."/>
            <person name="Town C.D."/>
            <person name="Fujii C.Y."/>
            <person name="Mason T.M."/>
            <person name="Bowman C.L."/>
            <person name="Barnstead M.E."/>
            <person name="Feldblyum T.V."/>
            <person name="Buell C.R."/>
            <person name="Ketchum K.A."/>
            <person name="Lee J.J."/>
            <person name="Ronning C.M."/>
            <person name="Koo H.L."/>
            <person name="Moffat K.S."/>
            <person name="Cronin L.A."/>
            <person name="Shen M."/>
            <person name="Pai G."/>
            <person name="Van Aken S."/>
            <person name="Umayam L."/>
            <person name="Tallon L.J."/>
            <person name="Gill J.E."/>
            <person name="Adams M.D."/>
            <person name="Carrera A.J."/>
            <person name="Creasy T.H."/>
            <person name="Goodman H.M."/>
            <person name="Somerville C.R."/>
            <person name="Copenhaver G.P."/>
            <person name="Preuss D."/>
            <person name="Nierman W.C."/>
            <person name="White O."/>
            <person name="Eisen J.A."/>
            <person name="Salzberg S.L."/>
            <person name="Fraser C.M."/>
            <person name="Venter J.C."/>
        </authorList>
    </citation>
    <scope>NUCLEOTIDE SEQUENCE [LARGE SCALE GENOMIC DNA]</scope>
    <source>
        <strain>cv. Columbia</strain>
    </source>
</reference>
<reference key="3">
    <citation type="journal article" date="2017" name="Plant J.">
        <title>Araport11: a complete reannotation of the Arabidopsis thaliana reference genome.</title>
        <authorList>
            <person name="Cheng C.Y."/>
            <person name="Krishnakumar V."/>
            <person name="Chan A.P."/>
            <person name="Thibaud-Nissen F."/>
            <person name="Schobel S."/>
            <person name="Town C.D."/>
        </authorList>
    </citation>
    <scope>GENOME REANNOTATION</scope>
    <source>
        <strain>cv. Columbia</strain>
    </source>
</reference>
<reference key="4">
    <citation type="journal article" date="2003" name="Science">
        <title>Empirical analysis of transcriptional activity in the Arabidopsis genome.</title>
        <authorList>
            <person name="Yamada K."/>
            <person name="Lim J."/>
            <person name="Dale J.M."/>
            <person name="Chen H."/>
            <person name="Shinn P."/>
            <person name="Palm C.J."/>
            <person name="Southwick A.M."/>
            <person name="Wu H.C."/>
            <person name="Kim C.J."/>
            <person name="Nguyen M."/>
            <person name="Pham P.K."/>
            <person name="Cheuk R.F."/>
            <person name="Karlin-Newmann G."/>
            <person name="Liu S.X."/>
            <person name="Lam B."/>
            <person name="Sakano H."/>
            <person name="Wu T."/>
            <person name="Yu G."/>
            <person name="Miranda M."/>
            <person name="Quach H.L."/>
            <person name="Tripp M."/>
            <person name="Chang C.H."/>
            <person name="Lee J.M."/>
            <person name="Toriumi M.J."/>
            <person name="Chan M.M."/>
            <person name="Tang C.C."/>
            <person name="Onodera C.S."/>
            <person name="Deng J.M."/>
            <person name="Akiyama K."/>
            <person name="Ansari Y."/>
            <person name="Arakawa T."/>
            <person name="Banh J."/>
            <person name="Banno F."/>
            <person name="Bowser L."/>
            <person name="Brooks S.Y."/>
            <person name="Carninci P."/>
            <person name="Chao Q."/>
            <person name="Choy N."/>
            <person name="Enju A."/>
            <person name="Goldsmith A.D."/>
            <person name="Gurjal M."/>
            <person name="Hansen N.F."/>
            <person name="Hayashizaki Y."/>
            <person name="Johnson-Hopson C."/>
            <person name="Hsuan V.W."/>
            <person name="Iida K."/>
            <person name="Karnes M."/>
            <person name="Khan S."/>
            <person name="Koesema E."/>
            <person name="Ishida J."/>
            <person name="Jiang P.X."/>
            <person name="Jones T."/>
            <person name="Kawai J."/>
            <person name="Kamiya A."/>
            <person name="Meyers C."/>
            <person name="Nakajima M."/>
            <person name="Narusaka M."/>
            <person name="Seki M."/>
            <person name="Sakurai T."/>
            <person name="Satou M."/>
            <person name="Tamse R."/>
            <person name="Vaysberg M."/>
            <person name="Wallender E.K."/>
            <person name="Wong C."/>
            <person name="Yamamura Y."/>
            <person name="Yuan S."/>
            <person name="Shinozaki K."/>
            <person name="Davis R.W."/>
            <person name="Theologis A."/>
            <person name="Ecker J.R."/>
        </authorList>
    </citation>
    <scope>NUCLEOTIDE SEQUENCE [LARGE SCALE MRNA]</scope>
    <source>
        <strain>cv. Columbia</strain>
    </source>
</reference>
<reference key="5">
    <citation type="journal article" date="1999" name="Plant Mol. Biol.">
        <title>The HD-Zip gene ATHB6 in Arabidopsis is expressed in developing leaves, roots and carpels and up-regulated by water deficit conditions.</title>
        <authorList>
            <person name="Soederman E."/>
            <person name="Hjellstroem M."/>
            <person name="Fahleson J."/>
            <person name="Engstroem P."/>
        </authorList>
    </citation>
    <scope>NUCLEOTIDE SEQUENCE [GENOMIC DNA] OF 1-291</scope>
    <scope>TISSUE SPECIFICITY</scope>
    <scope>INDUCTION</scope>
    <scope>FUNCTION</scope>
    <source>
        <strain>cv. Columbia</strain>
    </source>
</reference>
<reference key="6">
    <citation type="journal article" date="2002" name="EMBO J.">
        <title>Homeodomain protein ATHB6 is a target of the protein phosphatase ABI1 and regulates hormone responses in Arabidopsis.</title>
        <authorList>
            <person name="Himmelbach A."/>
            <person name="Hoffmann T."/>
            <person name="Leube M."/>
            <person name="Hoehener B."/>
            <person name="Grill E."/>
        </authorList>
    </citation>
    <scope>FUNCTION</scope>
    <scope>MUTAGENESIS OF 1-MET--TYR-43; SER-67 AND 218-LEU--ASN-311</scope>
    <scope>PHOSPHORYLATION</scope>
    <scope>INDUCTION BY ITSELF AND ABA</scope>
    <scope>INTERACTION WITH ABI1</scope>
</reference>
<reference key="7">
    <citation type="journal article" date="2005" name="Plant Physiol.">
        <title>Homeodomain leucine zipper class I genes in Arabidopsis. Expression patterns and phylogenetic relationships.</title>
        <authorList>
            <person name="Henriksson E."/>
            <person name="Olsson A.S.B."/>
            <person name="Johannesson H."/>
            <person name="Johansson H."/>
            <person name="Hanson J."/>
            <person name="Engstroem P."/>
            <person name="Soederman E."/>
        </authorList>
    </citation>
    <scope>GENE FAMILY</scope>
    <scope>TISSUE SPECIFICITY</scope>
    <scope>INDUCTION</scope>
</reference>
<proteinExistence type="evidence at protein level"/>
<protein>
    <recommendedName>
        <fullName>Homeobox-leucine zipper protein ATHB-6</fullName>
    </recommendedName>
    <alternativeName>
        <fullName>HD-ZIP protein ATHB-6</fullName>
    </alternativeName>
    <alternativeName>
        <fullName>Homeodomain transcription factor ATHB-6</fullName>
    </alternativeName>
</protein>
<feature type="chain" id="PRO_0000048824" description="Homeobox-leucine zipper protein ATHB-6">
    <location>
        <begin position="1"/>
        <end position="311"/>
    </location>
</feature>
<feature type="DNA-binding region" description="Homeobox" evidence="1">
    <location>
        <begin position="59"/>
        <end position="118"/>
    </location>
</feature>
<feature type="region of interest" description="Interaction with ABI1" evidence="4">
    <location>
        <begin position="1"/>
        <end position="43"/>
    </location>
</feature>
<feature type="region of interest" description="Disordered" evidence="2">
    <location>
        <begin position="1"/>
        <end position="32"/>
    </location>
</feature>
<feature type="region of interest" description="Leucine-zipper">
    <location>
        <begin position="119"/>
        <end position="154"/>
    </location>
</feature>
<feature type="region of interest" description="Disordered" evidence="2">
    <location>
        <begin position="157"/>
        <end position="183"/>
    </location>
</feature>
<feature type="region of interest" description="Interaction with ABI1" evidence="4">
    <location>
        <begin position="218"/>
        <end position="311"/>
    </location>
</feature>
<feature type="compositionally biased region" description="Polar residues" evidence="2">
    <location>
        <begin position="1"/>
        <end position="10"/>
    </location>
</feature>
<feature type="site" description="Interaction with ABI1">
    <location>
        <position position="67"/>
    </location>
</feature>
<feature type="mutagenesis site" description="Reduced interaction with ABI1." evidence="4">
    <location>
        <begin position="1"/>
        <end position="43"/>
    </location>
</feature>
<feature type="mutagenesis site" description="Reduced interaction with ABI1." evidence="4">
    <original>S</original>
    <variation>A</variation>
    <location>
        <position position="67"/>
    </location>
</feature>
<feature type="mutagenesis site" description="Loss of interaction with ABI1; when associated with 1-M--Y-43 deletion." evidence="4">
    <location>
        <begin position="218"/>
        <end position="311"/>
    </location>
</feature>
<gene>
    <name type="primary">ATHB-6</name>
    <name type="ordered locus">At2g22430</name>
    <name type="ORF">F14M13.17</name>
</gene>
<evidence type="ECO:0000255" key="1">
    <source>
        <dbReference type="PROSITE-ProRule" id="PRU00108"/>
    </source>
</evidence>
<evidence type="ECO:0000256" key="2">
    <source>
        <dbReference type="SAM" id="MobiDB-lite"/>
    </source>
</evidence>
<evidence type="ECO:0000269" key="3">
    <source>
    </source>
</evidence>
<evidence type="ECO:0000269" key="4">
    <source>
    </source>
</evidence>
<evidence type="ECO:0000269" key="5">
    <source>
    </source>
</evidence>
<evidence type="ECO:0000305" key="6"/>
<keyword id="KW-0938">Abscisic acid signaling pathway</keyword>
<keyword id="KW-0238">DNA-binding</keyword>
<keyword id="KW-0371">Homeobox</keyword>
<keyword id="KW-0539">Nucleus</keyword>
<keyword id="KW-1185">Reference proteome</keyword>
<keyword id="KW-0346">Stress response</keyword>
<keyword id="KW-0804">Transcription</keyword>
<keyword id="KW-0805">Transcription regulation</keyword>